<organism>
    <name type="scientific">Xylella fastidiosa (strain 9a5c)</name>
    <dbReference type="NCBI Taxonomy" id="160492"/>
    <lineage>
        <taxon>Bacteria</taxon>
        <taxon>Pseudomonadati</taxon>
        <taxon>Pseudomonadota</taxon>
        <taxon>Gammaproteobacteria</taxon>
        <taxon>Lysobacterales</taxon>
        <taxon>Lysobacteraceae</taxon>
        <taxon>Xylella</taxon>
    </lineage>
</organism>
<evidence type="ECO:0000255" key="1">
    <source>
        <dbReference type="HAMAP-Rule" id="MF_00108"/>
    </source>
</evidence>
<dbReference type="EC" id="2.7.7.60" evidence="1"/>
<dbReference type="EMBL" id="AE003849">
    <property type="protein sequence ID" value="AAF84102.1"/>
    <property type="molecule type" value="Genomic_DNA"/>
</dbReference>
<dbReference type="PIR" id="H82700">
    <property type="entry name" value="H82700"/>
</dbReference>
<dbReference type="SMR" id="Q9PDT6"/>
<dbReference type="STRING" id="160492.XF_1293"/>
<dbReference type="KEGG" id="xfa:XF_1293"/>
<dbReference type="eggNOG" id="COG1211">
    <property type="taxonomic scope" value="Bacteria"/>
</dbReference>
<dbReference type="HOGENOM" id="CLU_061281_3_1_6"/>
<dbReference type="UniPathway" id="UPA00056">
    <property type="reaction ID" value="UER00093"/>
</dbReference>
<dbReference type="Proteomes" id="UP000000812">
    <property type="component" value="Chromosome"/>
</dbReference>
<dbReference type="GO" id="GO:0050518">
    <property type="term" value="F:2-C-methyl-D-erythritol 4-phosphate cytidylyltransferase activity"/>
    <property type="evidence" value="ECO:0007669"/>
    <property type="project" value="UniProtKB-UniRule"/>
</dbReference>
<dbReference type="GO" id="GO:0019288">
    <property type="term" value="P:isopentenyl diphosphate biosynthetic process, methylerythritol 4-phosphate pathway"/>
    <property type="evidence" value="ECO:0007669"/>
    <property type="project" value="UniProtKB-UniRule"/>
</dbReference>
<dbReference type="CDD" id="cd02516">
    <property type="entry name" value="CDP-ME_synthetase"/>
    <property type="match status" value="1"/>
</dbReference>
<dbReference type="FunFam" id="3.90.550.10:FF:000003">
    <property type="entry name" value="2-C-methyl-D-erythritol 4-phosphate cytidylyltransferase"/>
    <property type="match status" value="1"/>
</dbReference>
<dbReference type="Gene3D" id="3.90.550.10">
    <property type="entry name" value="Spore Coat Polysaccharide Biosynthesis Protein SpsA, Chain A"/>
    <property type="match status" value="1"/>
</dbReference>
<dbReference type="HAMAP" id="MF_00108">
    <property type="entry name" value="IspD"/>
    <property type="match status" value="1"/>
</dbReference>
<dbReference type="InterPro" id="IPR001228">
    <property type="entry name" value="IspD"/>
</dbReference>
<dbReference type="InterPro" id="IPR034683">
    <property type="entry name" value="IspD/TarI"/>
</dbReference>
<dbReference type="InterPro" id="IPR050088">
    <property type="entry name" value="IspD/TarI_cytidylyltransf_bact"/>
</dbReference>
<dbReference type="InterPro" id="IPR018294">
    <property type="entry name" value="ISPD_synthase_CS"/>
</dbReference>
<dbReference type="InterPro" id="IPR029044">
    <property type="entry name" value="Nucleotide-diphossugar_trans"/>
</dbReference>
<dbReference type="NCBIfam" id="TIGR00453">
    <property type="entry name" value="ispD"/>
    <property type="match status" value="1"/>
</dbReference>
<dbReference type="PANTHER" id="PTHR32125">
    <property type="entry name" value="2-C-METHYL-D-ERYTHRITOL 4-PHOSPHATE CYTIDYLYLTRANSFERASE, CHLOROPLASTIC"/>
    <property type="match status" value="1"/>
</dbReference>
<dbReference type="PANTHER" id="PTHR32125:SF4">
    <property type="entry name" value="2-C-METHYL-D-ERYTHRITOL 4-PHOSPHATE CYTIDYLYLTRANSFERASE, CHLOROPLASTIC"/>
    <property type="match status" value="1"/>
</dbReference>
<dbReference type="Pfam" id="PF01128">
    <property type="entry name" value="IspD"/>
    <property type="match status" value="1"/>
</dbReference>
<dbReference type="SUPFAM" id="SSF53448">
    <property type="entry name" value="Nucleotide-diphospho-sugar transferases"/>
    <property type="match status" value="1"/>
</dbReference>
<dbReference type="PROSITE" id="PS01295">
    <property type="entry name" value="ISPD"/>
    <property type="match status" value="1"/>
</dbReference>
<gene>
    <name evidence="1" type="primary">ispD</name>
    <name type="ordered locus">XF_1293</name>
</gene>
<comment type="function">
    <text evidence="1">Catalyzes the formation of 4-diphosphocytidyl-2-C-methyl-D-erythritol from CTP and 2-C-methyl-D-erythritol 4-phosphate (MEP).</text>
</comment>
<comment type="catalytic activity">
    <reaction evidence="1">
        <text>2-C-methyl-D-erythritol 4-phosphate + CTP + H(+) = 4-CDP-2-C-methyl-D-erythritol + diphosphate</text>
        <dbReference type="Rhea" id="RHEA:13429"/>
        <dbReference type="ChEBI" id="CHEBI:15378"/>
        <dbReference type="ChEBI" id="CHEBI:33019"/>
        <dbReference type="ChEBI" id="CHEBI:37563"/>
        <dbReference type="ChEBI" id="CHEBI:57823"/>
        <dbReference type="ChEBI" id="CHEBI:58262"/>
        <dbReference type="EC" id="2.7.7.60"/>
    </reaction>
</comment>
<comment type="pathway">
    <text evidence="1">Isoprenoid biosynthesis; isopentenyl diphosphate biosynthesis via DXP pathway; isopentenyl diphosphate from 1-deoxy-D-xylulose 5-phosphate: step 2/6.</text>
</comment>
<comment type="similarity">
    <text evidence="1">Belongs to the IspD/TarI cytidylyltransferase family. IspD subfamily.</text>
</comment>
<keyword id="KW-0414">Isoprene biosynthesis</keyword>
<keyword id="KW-0548">Nucleotidyltransferase</keyword>
<keyword id="KW-0808">Transferase</keyword>
<sequence>MSVGVWAVIPAAGRGVRFGSPVPKQYLPVVGRPLIVYTLEALAAHPAVCGLMVVVAEGDLAWSSWTEVAGKPLLTCSGGVTRAASVLSGLLALPQVVHADDFVLVHDAARPNVALSDLERLLEAGCAHPVGAILAVPVRDTLKRAGADGSIDGTEPRERLWRAFTPQLFRRSQLVRGLQVAAADGIEITDEAMVMERQGLRPLLVECAESNFKITTPDDLVRFEFELARRV</sequence>
<protein>
    <recommendedName>
        <fullName evidence="1">2-C-methyl-D-erythritol 4-phosphate cytidylyltransferase</fullName>
        <ecNumber evidence="1">2.7.7.60</ecNumber>
    </recommendedName>
    <alternativeName>
        <fullName evidence="1">4-diphosphocytidyl-2C-methyl-D-erythritol synthase</fullName>
    </alternativeName>
    <alternativeName>
        <fullName evidence="1">MEP cytidylyltransferase</fullName>
        <shortName evidence="1">MCT</shortName>
    </alternativeName>
</protein>
<accession>Q9PDT6</accession>
<name>ISPD_XYLFA</name>
<proteinExistence type="inferred from homology"/>
<feature type="chain" id="PRO_0000075651" description="2-C-methyl-D-erythritol 4-phosphate cytidylyltransferase">
    <location>
        <begin position="1"/>
        <end position="231"/>
    </location>
</feature>
<feature type="site" description="Transition state stabilizer" evidence="1">
    <location>
        <position position="17"/>
    </location>
</feature>
<feature type="site" description="Transition state stabilizer" evidence="1">
    <location>
        <position position="24"/>
    </location>
</feature>
<feature type="site" description="Positions MEP for the nucleophilic attack" evidence="1">
    <location>
        <position position="157"/>
    </location>
</feature>
<feature type="site" description="Positions MEP for the nucleophilic attack" evidence="1">
    <location>
        <position position="213"/>
    </location>
</feature>
<reference key="1">
    <citation type="journal article" date="2000" name="Nature">
        <title>The genome sequence of the plant pathogen Xylella fastidiosa.</title>
        <authorList>
            <person name="Simpson A.J.G."/>
            <person name="Reinach F.C."/>
            <person name="Arruda P."/>
            <person name="Abreu F.A."/>
            <person name="Acencio M."/>
            <person name="Alvarenga R."/>
            <person name="Alves L.M.C."/>
            <person name="Araya J.E."/>
            <person name="Baia G.S."/>
            <person name="Baptista C.S."/>
            <person name="Barros M.H."/>
            <person name="Bonaccorsi E.D."/>
            <person name="Bordin S."/>
            <person name="Bove J.M."/>
            <person name="Briones M.R.S."/>
            <person name="Bueno M.R.P."/>
            <person name="Camargo A.A."/>
            <person name="Camargo L.E.A."/>
            <person name="Carraro D.M."/>
            <person name="Carrer H."/>
            <person name="Colauto N.B."/>
            <person name="Colombo C."/>
            <person name="Costa F.F."/>
            <person name="Costa M.C.R."/>
            <person name="Costa-Neto C.M."/>
            <person name="Coutinho L.L."/>
            <person name="Cristofani M."/>
            <person name="Dias-Neto E."/>
            <person name="Docena C."/>
            <person name="El-Dorry H."/>
            <person name="Facincani A.P."/>
            <person name="Ferreira A.J.S."/>
            <person name="Ferreira V.C.A."/>
            <person name="Ferro J.A."/>
            <person name="Fraga J.S."/>
            <person name="Franca S.C."/>
            <person name="Franco M.C."/>
            <person name="Frohme M."/>
            <person name="Furlan L.R."/>
            <person name="Garnier M."/>
            <person name="Goldman G.H."/>
            <person name="Goldman M.H.S."/>
            <person name="Gomes S.L."/>
            <person name="Gruber A."/>
            <person name="Ho P.L."/>
            <person name="Hoheisel J.D."/>
            <person name="Junqueira M.L."/>
            <person name="Kemper E.L."/>
            <person name="Kitajima J.P."/>
            <person name="Krieger J.E."/>
            <person name="Kuramae E.E."/>
            <person name="Laigret F."/>
            <person name="Lambais M.R."/>
            <person name="Leite L.C.C."/>
            <person name="Lemos E.G.M."/>
            <person name="Lemos M.V.F."/>
            <person name="Lopes S.A."/>
            <person name="Lopes C.R."/>
            <person name="Machado J.A."/>
            <person name="Machado M.A."/>
            <person name="Madeira A.M.B.N."/>
            <person name="Madeira H.M.F."/>
            <person name="Marino C.L."/>
            <person name="Marques M.V."/>
            <person name="Martins E.A.L."/>
            <person name="Martins E.M.F."/>
            <person name="Matsukuma A.Y."/>
            <person name="Menck C.F.M."/>
            <person name="Miracca E.C."/>
            <person name="Miyaki C.Y."/>
            <person name="Monteiro-Vitorello C.B."/>
            <person name="Moon D.H."/>
            <person name="Nagai M.A."/>
            <person name="Nascimento A.L.T.O."/>
            <person name="Netto L.E.S."/>
            <person name="Nhani A. Jr."/>
            <person name="Nobrega F.G."/>
            <person name="Nunes L.R."/>
            <person name="Oliveira M.A."/>
            <person name="de Oliveira M.C."/>
            <person name="de Oliveira R.C."/>
            <person name="Palmieri D.A."/>
            <person name="Paris A."/>
            <person name="Peixoto B.R."/>
            <person name="Pereira G.A.G."/>
            <person name="Pereira H.A. Jr."/>
            <person name="Pesquero J.B."/>
            <person name="Quaggio R.B."/>
            <person name="Roberto P.G."/>
            <person name="Rodrigues V."/>
            <person name="de Rosa A.J.M."/>
            <person name="de Rosa V.E. Jr."/>
            <person name="de Sa R.G."/>
            <person name="Santelli R.V."/>
            <person name="Sawasaki H.E."/>
            <person name="da Silva A.C.R."/>
            <person name="da Silva A.M."/>
            <person name="da Silva F.R."/>
            <person name="Silva W.A. Jr."/>
            <person name="da Silveira J.F."/>
            <person name="Silvestri M.L.Z."/>
            <person name="Siqueira W.J."/>
            <person name="de Souza A.A."/>
            <person name="de Souza A.P."/>
            <person name="Terenzi M.F."/>
            <person name="Truffi D."/>
            <person name="Tsai S.M."/>
            <person name="Tsuhako M.H."/>
            <person name="Vallada H."/>
            <person name="Van Sluys M.A."/>
            <person name="Verjovski-Almeida S."/>
            <person name="Vettore A.L."/>
            <person name="Zago M.A."/>
            <person name="Zatz M."/>
            <person name="Meidanis J."/>
            <person name="Setubal J.C."/>
        </authorList>
    </citation>
    <scope>NUCLEOTIDE SEQUENCE [LARGE SCALE GENOMIC DNA]</scope>
    <source>
        <strain>9a5c</strain>
    </source>
</reference>